<proteinExistence type="evidence at transcript level"/>
<dbReference type="EC" id="3.6.4.13"/>
<dbReference type="EMBL" id="U34773">
    <property type="protein sequence ID" value="AAC47309.1"/>
    <property type="molecule type" value="mRNA"/>
</dbReference>
<dbReference type="EMBL" id="AE014296">
    <property type="protein sequence ID" value="AAF51814.1"/>
    <property type="molecule type" value="Genomic_DNA"/>
</dbReference>
<dbReference type="EMBL" id="AY119661">
    <property type="protein sequence ID" value="AAM50315.1"/>
    <property type="molecule type" value="mRNA"/>
</dbReference>
<dbReference type="EMBL" id="AF057167">
    <property type="protein sequence ID" value="AAD09429.1"/>
    <property type="molecule type" value="Genomic_DNA"/>
</dbReference>
<dbReference type="RefSeq" id="NP_524212.2">
    <property type="nucleotide sequence ID" value="NM_079488.4"/>
</dbReference>
<dbReference type="SMR" id="Q9VNV3"/>
<dbReference type="BioGRID" id="65694">
    <property type="interactions" value="5"/>
</dbReference>
<dbReference type="FunCoup" id="Q9VNV3">
    <property type="interactions" value="2394"/>
</dbReference>
<dbReference type="IntAct" id="Q9VNV3">
    <property type="interactions" value="3"/>
</dbReference>
<dbReference type="STRING" id="7227.FBpp0078144"/>
<dbReference type="GlyGen" id="Q9VNV3">
    <property type="glycosylation" value="1 site"/>
</dbReference>
<dbReference type="PaxDb" id="7227-FBpp0078144"/>
<dbReference type="DNASU" id="40457"/>
<dbReference type="EnsemblMetazoa" id="FBtr0078492">
    <property type="protein sequence ID" value="FBpp0078144"/>
    <property type="gene ID" value="FBgn0015075"/>
</dbReference>
<dbReference type="GeneID" id="40457"/>
<dbReference type="KEGG" id="dme:Dmel_CG9054"/>
<dbReference type="UCSC" id="CG9054-RA">
    <property type="organism name" value="d. melanogaster"/>
</dbReference>
<dbReference type="AGR" id="FB:FBgn0015075"/>
<dbReference type="CTD" id="1653"/>
<dbReference type="FlyBase" id="FBgn0015075">
    <property type="gene designation" value="Ddx1"/>
</dbReference>
<dbReference type="VEuPathDB" id="VectorBase:FBgn0015075"/>
<dbReference type="eggNOG" id="KOG0349">
    <property type="taxonomic scope" value="Eukaryota"/>
</dbReference>
<dbReference type="GeneTree" id="ENSGT00940000155678"/>
<dbReference type="HOGENOM" id="CLU_016321_0_0_1"/>
<dbReference type="InParanoid" id="Q9VNV3"/>
<dbReference type="OMA" id="KRQQVKF"/>
<dbReference type="OrthoDB" id="1735at2759"/>
<dbReference type="PhylomeDB" id="Q9VNV3"/>
<dbReference type="SignaLink" id="Q9VNV3"/>
<dbReference type="BioGRID-ORCS" id="40457">
    <property type="hits" value="0 hits in 1 CRISPR screen"/>
</dbReference>
<dbReference type="GenomeRNAi" id="40457"/>
<dbReference type="PRO" id="PR:Q9VNV3"/>
<dbReference type="Proteomes" id="UP000000803">
    <property type="component" value="Chromosome 3L"/>
</dbReference>
<dbReference type="Bgee" id="FBgn0015075">
    <property type="expression patterns" value="Expressed in embryonic/larval hemocyte (Drosophila) and 60 other cell types or tissues"/>
</dbReference>
<dbReference type="GO" id="GO:0005634">
    <property type="term" value="C:nucleus"/>
    <property type="evidence" value="ECO:0000250"/>
    <property type="project" value="UniProtKB"/>
</dbReference>
<dbReference type="GO" id="GO:0072669">
    <property type="term" value="C:tRNA-splicing ligase complex"/>
    <property type="evidence" value="ECO:0000250"/>
    <property type="project" value="FlyBase"/>
</dbReference>
<dbReference type="GO" id="GO:0005524">
    <property type="term" value="F:ATP binding"/>
    <property type="evidence" value="ECO:0007669"/>
    <property type="project" value="UniProtKB-KW"/>
</dbReference>
<dbReference type="GO" id="GO:0016887">
    <property type="term" value="F:ATP hydrolysis activity"/>
    <property type="evidence" value="ECO:0007669"/>
    <property type="project" value="RHEA"/>
</dbReference>
<dbReference type="GO" id="GO:0003682">
    <property type="term" value="F:chromatin binding"/>
    <property type="evidence" value="ECO:0000250"/>
    <property type="project" value="UniProtKB"/>
</dbReference>
<dbReference type="GO" id="GO:0033677">
    <property type="term" value="F:DNA/RNA helicase activity"/>
    <property type="evidence" value="ECO:0000250"/>
    <property type="project" value="UniProtKB"/>
</dbReference>
<dbReference type="GO" id="GO:0004527">
    <property type="term" value="F:exonuclease activity"/>
    <property type="evidence" value="ECO:0007669"/>
    <property type="project" value="UniProtKB-KW"/>
</dbReference>
<dbReference type="GO" id="GO:0004518">
    <property type="term" value="F:nuclease activity"/>
    <property type="evidence" value="ECO:0000250"/>
    <property type="project" value="UniProtKB"/>
</dbReference>
<dbReference type="GO" id="GO:0008143">
    <property type="term" value="F:poly(A) binding"/>
    <property type="evidence" value="ECO:0000250"/>
    <property type="project" value="UniProtKB"/>
</dbReference>
<dbReference type="GO" id="GO:0003724">
    <property type="term" value="F:RNA helicase activity"/>
    <property type="evidence" value="ECO:0000250"/>
    <property type="project" value="UniProtKB"/>
</dbReference>
<dbReference type="GO" id="GO:0003712">
    <property type="term" value="F:transcription coregulator activity"/>
    <property type="evidence" value="ECO:0000250"/>
    <property type="project" value="UniProtKB"/>
</dbReference>
<dbReference type="GO" id="GO:0006302">
    <property type="term" value="P:double-strand break repair"/>
    <property type="evidence" value="ECO:0000250"/>
    <property type="project" value="UniProtKB"/>
</dbReference>
<dbReference type="GO" id="GO:0001700">
    <property type="term" value="P:embryonic development via the syncytial blastoderm"/>
    <property type="evidence" value="ECO:0000270"/>
    <property type="project" value="UniProtKB"/>
</dbReference>
<dbReference type="GO" id="GO:0048477">
    <property type="term" value="P:oogenesis"/>
    <property type="evidence" value="ECO:0000315"/>
    <property type="project" value="FlyBase"/>
</dbReference>
<dbReference type="GO" id="GO:0007283">
    <property type="term" value="P:spermatogenesis"/>
    <property type="evidence" value="ECO:0000315"/>
    <property type="project" value="FlyBase"/>
</dbReference>
<dbReference type="GO" id="GO:0008033">
    <property type="term" value="P:tRNA processing"/>
    <property type="evidence" value="ECO:0000315"/>
    <property type="project" value="FlyBase"/>
</dbReference>
<dbReference type="CDD" id="cd17938">
    <property type="entry name" value="DEADc_DDX1"/>
    <property type="match status" value="1"/>
</dbReference>
<dbReference type="CDD" id="cd18787">
    <property type="entry name" value="SF2_C_DEAD"/>
    <property type="match status" value="1"/>
</dbReference>
<dbReference type="CDD" id="cd12873">
    <property type="entry name" value="SPRY_DDX1"/>
    <property type="match status" value="1"/>
</dbReference>
<dbReference type="FunFam" id="2.60.120.920:FF:000076">
    <property type="entry name" value="ATP-dependent RNA helicase DDX1"/>
    <property type="match status" value="1"/>
</dbReference>
<dbReference type="FunFam" id="3.40.50.300:FF:000652">
    <property type="entry name" value="ATP-dependent RNA helicase DDX1"/>
    <property type="match status" value="1"/>
</dbReference>
<dbReference type="FunFam" id="3.40.50.300:FF:000708">
    <property type="entry name" value="ATP-dependent RNA helicase DDX1"/>
    <property type="match status" value="1"/>
</dbReference>
<dbReference type="FunFam" id="3.40.50.300:FF:000716">
    <property type="entry name" value="ATP-dependent RNA helicase DDX1"/>
    <property type="match status" value="1"/>
</dbReference>
<dbReference type="Gene3D" id="2.60.120.920">
    <property type="match status" value="1"/>
</dbReference>
<dbReference type="Gene3D" id="3.40.50.300">
    <property type="entry name" value="P-loop containing nucleotide triphosphate hydrolases"/>
    <property type="match status" value="3"/>
</dbReference>
<dbReference type="InterPro" id="IPR001870">
    <property type="entry name" value="B30.2/SPRY"/>
</dbReference>
<dbReference type="InterPro" id="IPR043136">
    <property type="entry name" value="B30.2/SPRY_sf"/>
</dbReference>
<dbReference type="InterPro" id="IPR013320">
    <property type="entry name" value="ConA-like_dom_sf"/>
</dbReference>
<dbReference type="InterPro" id="IPR011545">
    <property type="entry name" value="DEAD/DEAH_box_helicase_dom"/>
</dbReference>
<dbReference type="InterPro" id="IPR014001">
    <property type="entry name" value="Helicase_ATP-bd"/>
</dbReference>
<dbReference type="InterPro" id="IPR001650">
    <property type="entry name" value="Helicase_C-like"/>
</dbReference>
<dbReference type="InterPro" id="IPR027417">
    <property type="entry name" value="P-loop_NTPase"/>
</dbReference>
<dbReference type="InterPro" id="IPR003877">
    <property type="entry name" value="SPRY_dom"/>
</dbReference>
<dbReference type="PANTHER" id="PTHR24031">
    <property type="entry name" value="RNA HELICASE"/>
    <property type="match status" value="1"/>
</dbReference>
<dbReference type="Pfam" id="PF00270">
    <property type="entry name" value="DEAD"/>
    <property type="match status" value="2"/>
</dbReference>
<dbReference type="Pfam" id="PF00271">
    <property type="entry name" value="Helicase_C"/>
    <property type="match status" value="1"/>
</dbReference>
<dbReference type="Pfam" id="PF00622">
    <property type="entry name" value="SPRY"/>
    <property type="match status" value="1"/>
</dbReference>
<dbReference type="SMART" id="SM00487">
    <property type="entry name" value="DEXDc"/>
    <property type="match status" value="1"/>
</dbReference>
<dbReference type="SMART" id="SM00490">
    <property type="entry name" value="HELICc"/>
    <property type="match status" value="1"/>
</dbReference>
<dbReference type="SMART" id="SM00449">
    <property type="entry name" value="SPRY"/>
    <property type="match status" value="1"/>
</dbReference>
<dbReference type="SUPFAM" id="SSF49899">
    <property type="entry name" value="Concanavalin A-like lectins/glucanases"/>
    <property type="match status" value="1"/>
</dbReference>
<dbReference type="SUPFAM" id="SSF52540">
    <property type="entry name" value="P-loop containing nucleoside triphosphate hydrolases"/>
    <property type="match status" value="2"/>
</dbReference>
<dbReference type="PROSITE" id="PS50188">
    <property type="entry name" value="B302_SPRY"/>
    <property type="match status" value="1"/>
</dbReference>
<dbReference type="PROSITE" id="PS51192">
    <property type="entry name" value="HELICASE_ATP_BIND_1"/>
    <property type="match status" value="2"/>
</dbReference>
<dbReference type="PROSITE" id="PS51194">
    <property type="entry name" value="HELICASE_CTER"/>
    <property type="match status" value="1"/>
</dbReference>
<dbReference type="PROSITE" id="PS51195">
    <property type="entry name" value="Q_MOTIF"/>
    <property type="match status" value="1"/>
</dbReference>
<evidence type="ECO:0000250" key="1"/>
<evidence type="ECO:0000255" key="2">
    <source>
        <dbReference type="PROSITE-ProRule" id="PRU00541"/>
    </source>
</evidence>
<evidence type="ECO:0000255" key="3">
    <source>
        <dbReference type="PROSITE-ProRule" id="PRU00542"/>
    </source>
</evidence>
<evidence type="ECO:0000255" key="4">
    <source>
        <dbReference type="PROSITE-ProRule" id="PRU00548"/>
    </source>
</evidence>
<evidence type="ECO:0000269" key="5">
    <source>
    </source>
</evidence>
<evidence type="ECO:0000305" key="6"/>
<evidence type="ECO:0000312" key="7">
    <source>
        <dbReference type="EMBL" id="AAM50315.1"/>
    </source>
</evidence>
<name>DDX1_DROME</name>
<organism>
    <name type="scientific">Drosophila melanogaster</name>
    <name type="common">Fruit fly</name>
    <dbReference type="NCBI Taxonomy" id="7227"/>
    <lineage>
        <taxon>Eukaryota</taxon>
        <taxon>Metazoa</taxon>
        <taxon>Ecdysozoa</taxon>
        <taxon>Arthropoda</taxon>
        <taxon>Hexapoda</taxon>
        <taxon>Insecta</taxon>
        <taxon>Pterygota</taxon>
        <taxon>Neoptera</taxon>
        <taxon>Endopterygota</taxon>
        <taxon>Diptera</taxon>
        <taxon>Brachycera</taxon>
        <taxon>Muscomorpha</taxon>
        <taxon>Ephydroidea</taxon>
        <taxon>Drosophilidae</taxon>
        <taxon>Drosophila</taxon>
        <taxon>Sophophora</taxon>
    </lineage>
</organism>
<accession>Q9VNV3</accession>
<accession>O61663</accession>
<accession>Q24131</accession>
<reference evidence="6" key="1">
    <citation type="journal article" date="1996" name="Gene">
        <title>A Drosophila melanogaster homologue of the human DEAD-box gene DDX1.</title>
        <authorList>
            <person name="Rafti F."/>
            <person name="Scarvelis D."/>
            <person name="Lasko P.F."/>
        </authorList>
    </citation>
    <scope>NUCLEOTIDE SEQUENCE [GENOMIC DNA / MRNA]</scope>
    <scope>DEVELOPMENTAL STAGE</scope>
    <source>
        <tissue>Embryo</tissue>
    </source>
</reference>
<reference evidence="6" key="2">
    <citation type="journal article" date="2000" name="Science">
        <title>The genome sequence of Drosophila melanogaster.</title>
        <authorList>
            <person name="Adams M.D."/>
            <person name="Celniker S.E."/>
            <person name="Holt R.A."/>
            <person name="Evans C.A."/>
            <person name="Gocayne J.D."/>
            <person name="Amanatides P.G."/>
            <person name="Scherer S.E."/>
            <person name="Li P.W."/>
            <person name="Hoskins R.A."/>
            <person name="Galle R.F."/>
            <person name="George R.A."/>
            <person name="Lewis S.E."/>
            <person name="Richards S."/>
            <person name="Ashburner M."/>
            <person name="Henderson S.N."/>
            <person name="Sutton G.G."/>
            <person name="Wortman J.R."/>
            <person name="Yandell M.D."/>
            <person name="Zhang Q."/>
            <person name="Chen L.X."/>
            <person name="Brandon R.C."/>
            <person name="Rogers Y.-H.C."/>
            <person name="Blazej R.G."/>
            <person name="Champe M."/>
            <person name="Pfeiffer B.D."/>
            <person name="Wan K.H."/>
            <person name="Doyle C."/>
            <person name="Baxter E.G."/>
            <person name="Helt G."/>
            <person name="Nelson C.R."/>
            <person name="Miklos G.L.G."/>
            <person name="Abril J.F."/>
            <person name="Agbayani A."/>
            <person name="An H.-J."/>
            <person name="Andrews-Pfannkoch C."/>
            <person name="Baldwin D."/>
            <person name="Ballew R.M."/>
            <person name="Basu A."/>
            <person name="Baxendale J."/>
            <person name="Bayraktaroglu L."/>
            <person name="Beasley E.M."/>
            <person name="Beeson K.Y."/>
            <person name="Benos P.V."/>
            <person name="Berman B.P."/>
            <person name="Bhandari D."/>
            <person name="Bolshakov S."/>
            <person name="Borkova D."/>
            <person name="Botchan M.R."/>
            <person name="Bouck J."/>
            <person name="Brokstein P."/>
            <person name="Brottier P."/>
            <person name="Burtis K.C."/>
            <person name="Busam D.A."/>
            <person name="Butler H."/>
            <person name="Cadieu E."/>
            <person name="Center A."/>
            <person name="Chandra I."/>
            <person name="Cherry J.M."/>
            <person name="Cawley S."/>
            <person name="Dahlke C."/>
            <person name="Davenport L.B."/>
            <person name="Davies P."/>
            <person name="de Pablos B."/>
            <person name="Delcher A."/>
            <person name="Deng Z."/>
            <person name="Mays A.D."/>
            <person name="Dew I."/>
            <person name="Dietz S.M."/>
            <person name="Dodson K."/>
            <person name="Doup L.E."/>
            <person name="Downes M."/>
            <person name="Dugan-Rocha S."/>
            <person name="Dunkov B.C."/>
            <person name="Dunn P."/>
            <person name="Durbin K.J."/>
            <person name="Evangelista C.C."/>
            <person name="Ferraz C."/>
            <person name="Ferriera S."/>
            <person name="Fleischmann W."/>
            <person name="Fosler C."/>
            <person name="Gabrielian A.E."/>
            <person name="Garg N.S."/>
            <person name="Gelbart W.M."/>
            <person name="Glasser K."/>
            <person name="Glodek A."/>
            <person name="Gong F."/>
            <person name="Gorrell J.H."/>
            <person name="Gu Z."/>
            <person name="Guan P."/>
            <person name="Harris M."/>
            <person name="Harris N.L."/>
            <person name="Harvey D.A."/>
            <person name="Heiman T.J."/>
            <person name="Hernandez J.R."/>
            <person name="Houck J."/>
            <person name="Hostin D."/>
            <person name="Houston K.A."/>
            <person name="Howland T.J."/>
            <person name="Wei M.-H."/>
            <person name="Ibegwam C."/>
            <person name="Jalali M."/>
            <person name="Kalush F."/>
            <person name="Karpen G.H."/>
            <person name="Ke Z."/>
            <person name="Kennison J.A."/>
            <person name="Ketchum K.A."/>
            <person name="Kimmel B.E."/>
            <person name="Kodira C.D."/>
            <person name="Kraft C.L."/>
            <person name="Kravitz S."/>
            <person name="Kulp D."/>
            <person name="Lai Z."/>
            <person name="Lasko P."/>
            <person name="Lei Y."/>
            <person name="Levitsky A.A."/>
            <person name="Li J.H."/>
            <person name="Li Z."/>
            <person name="Liang Y."/>
            <person name="Lin X."/>
            <person name="Liu X."/>
            <person name="Mattei B."/>
            <person name="McIntosh T.C."/>
            <person name="McLeod M.P."/>
            <person name="McPherson D."/>
            <person name="Merkulov G."/>
            <person name="Milshina N.V."/>
            <person name="Mobarry C."/>
            <person name="Morris J."/>
            <person name="Moshrefi A."/>
            <person name="Mount S.M."/>
            <person name="Moy M."/>
            <person name="Murphy B."/>
            <person name="Murphy L."/>
            <person name="Muzny D.M."/>
            <person name="Nelson D.L."/>
            <person name="Nelson D.R."/>
            <person name="Nelson K.A."/>
            <person name="Nixon K."/>
            <person name="Nusskern D.R."/>
            <person name="Pacleb J.M."/>
            <person name="Palazzolo M."/>
            <person name="Pittman G.S."/>
            <person name="Pan S."/>
            <person name="Pollard J."/>
            <person name="Puri V."/>
            <person name="Reese M.G."/>
            <person name="Reinert K."/>
            <person name="Remington K."/>
            <person name="Saunders R.D.C."/>
            <person name="Scheeler F."/>
            <person name="Shen H."/>
            <person name="Shue B.C."/>
            <person name="Siden-Kiamos I."/>
            <person name="Simpson M."/>
            <person name="Skupski M.P."/>
            <person name="Smith T.J."/>
            <person name="Spier E."/>
            <person name="Spradling A.C."/>
            <person name="Stapleton M."/>
            <person name="Strong R."/>
            <person name="Sun E."/>
            <person name="Svirskas R."/>
            <person name="Tector C."/>
            <person name="Turner R."/>
            <person name="Venter E."/>
            <person name="Wang A.H."/>
            <person name="Wang X."/>
            <person name="Wang Z.-Y."/>
            <person name="Wassarman D.A."/>
            <person name="Weinstock G.M."/>
            <person name="Weissenbach J."/>
            <person name="Williams S.M."/>
            <person name="Woodage T."/>
            <person name="Worley K.C."/>
            <person name="Wu D."/>
            <person name="Yang S."/>
            <person name="Yao Q.A."/>
            <person name="Ye J."/>
            <person name="Yeh R.-F."/>
            <person name="Zaveri J.S."/>
            <person name="Zhan M."/>
            <person name="Zhang G."/>
            <person name="Zhao Q."/>
            <person name="Zheng L."/>
            <person name="Zheng X.H."/>
            <person name="Zhong F.N."/>
            <person name="Zhong W."/>
            <person name="Zhou X."/>
            <person name="Zhu S.C."/>
            <person name="Zhu X."/>
            <person name="Smith H.O."/>
            <person name="Gibbs R.A."/>
            <person name="Myers E.W."/>
            <person name="Rubin G.M."/>
            <person name="Venter J.C."/>
        </authorList>
    </citation>
    <scope>NUCLEOTIDE SEQUENCE [LARGE SCALE GENOMIC DNA]</scope>
    <source>
        <strain>Berkeley</strain>
    </source>
</reference>
<reference key="3">
    <citation type="journal article" date="2002" name="Genome Biol.">
        <title>Annotation of the Drosophila melanogaster euchromatic genome: a systematic review.</title>
        <authorList>
            <person name="Misra S."/>
            <person name="Crosby M.A."/>
            <person name="Mungall C.J."/>
            <person name="Matthews B.B."/>
            <person name="Campbell K.S."/>
            <person name="Hradecky P."/>
            <person name="Huang Y."/>
            <person name="Kaminker J.S."/>
            <person name="Millburn G.H."/>
            <person name="Prochnik S.E."/>
            <person name="Smith C.D."/>
            <person name="Tupy J.L."/>
            <person name="Whitfield E.J."/>
            <person name="Bayraktaroglu L."/>
            <person name="Berman B.P."/>
            <person name="Bettencourt B.R."/>
            <person name="Celniker S.E."/>
            <person name="de Grey A.D.N.J."/>
            <person name="Drysdale R.A."/>
            <person name="Harris N.L."/>
            <person name="Richter J."/>
            <person name="Russo S."/>
            <person name="Schroeder A.J."/>
            <person name="Shu S.Q."/>
            <person name="Stapleton M."/>
            <person name="Yamada C."/>
            <person name="Ashburner M."/>
            <person name="Gelbart W.M."/>
            <person name="Rubin G.M."/>
            <person name="Lewis S.E."/>
        </authorList>
    </citation>
    <scope>GENOME REANNOTATION</scope>
    <source>
        <strain>Berkeley</strain>
    </source>
</reference>
<reference key="4">
    <citation type="journal article" date="2002" name="Genome Biol.">
        <title>A Drosophila full-length cDNA resource.</title>
        <authorList>
            <person name="Stapleton M."/>
            <person name="Carlson J.W."/>
            <person name="Brokstein P."/>
            <person name="Yu C."/>
            <person name="Champe M."/>
            <person name="George R.A."/>
            <person name="Guarin H."/>
            <person name="Kronmiller B."/>
            <person name="Pacleb J.M."/>
            <person name="Park S."/>
            <person name="Wan K.H."/>
            <person name="Rubin G.M."/>
            <person name="Celniker S.E."/>
        </authorList>
    </citation>
    <scope>NUCLEOTIDE SEQUENCE [LARGE SCALE MRNA]</scope>
    <source>
        <strain>Berkeley</strain>
        <tissue>Embryo</tissue>
    </source>
</reference>
<reference evidence="6 7" key="5">
    <citation type="submission" date="1998-04" db="EMBL/GenBank/DDBJ databases">
        <authorList>
            <person name="Zinsmaier K.E."/>
            <person name="Eberle K.K."/>
            <person name="Buchner E."/>
        </authorList>
    </citation>
    <scope>NUCLEOTIDE SEQUENCE [GENOMIC DNA] OF 458-727</scope>
    <source>
        <strain>Berlin</strain>
    </source>
</reference>
<keyword id="KW-0067">ATP-binding</keyword>
<keyword id="KW-0269">Exonuclease</keyword>
<keyword id="KW-0347">Helicase</keyword>
<keyword id="KW-0378">Hydrolase</keyword>
<keyword id="KW-0540">Nuclease</keyword>
<keyword id="KW-0547">Nucleotide-binding</keyword>
<keyword id="KW-1185">Reference proteome</keyword>
<keyword id="KW-0694">RNA-binding</keyword>
<gene>
    <name type="primary">Ddx1</name>
    <name type="ORF">CG9054</name>
</gene>
<sequence>MTAFEEFGVLPELGMATDELDWTLPTDVQAEAIPLILGGGDVLMAAETGSGKTGAFCLPILQIVWETLRDLEEGKAGKGGAIGGAVTPWTMSFFDRGNALAVTPDGLRCQSREFKEWHGCRATTGVRGKGKFYFEATVTDEGLCRVGWSTQQANLDLGTCRMGFGFGGTGKKSNNRQFDDYGEAFGKADVIGCLLDLKNQEVSFTKNGQNLGVAFRLPDNLAKETFYPAVVLKNAEMQFNFGKTDFKYAPGNGFVGACQAGPEHSKANPITGPAAGAPSAKPAPNAPQAIIMEPSRELAEQTYNQIEKFKYHLSNPEVRSLLLIGGVRLEEQKAQLMQGTHIVVGTPGRLEEMINSGLVLLTHCRFFVLDEADALLKQGYTELIDRLHKQIPKITSDGRRLQMVVCSATLHAFEVKKMAERLMHFPTWVDLKGEDAVPETVHHVVCLVDPQMDTTWQSLRQPIGTDGVHDRDNVHPGNHSKETLSQAVKLLKGEYCVHAIDKHNMDRAIIFCRTKQDCDNLERFLRQRGGKHYSCVCLHGDRKPQERKENLEMFKRQQVKFLICTDVAARGLDITGLPFMINVTLPDDKTNYVHRIGRVGRAERMGLAISLVATVPEKVWYHGEWCKSRGRSCNNTNLTEVRGCCIWYNEPNLLAEVEDHLNITIQQVDKTMDVPVNDFDGKVVYGQKNLRTGSGYEDHVEQLVPTVRKLTELELQSQSLFLKRLKV</sequence>
<feature type="chain" id="PRO_0000054989" description="ATP-dependent RNA helicase Ddx1">
    <location>
        <begin position="1"/>
        <end position="727"/>
    </location>
</feature>
<feature type="domain" description="Helicase ATP-binding" evidence="2">
    <location>
        <begin position="2"/>
        <end position="428"/>
    </location>
</feature>
<feature type="domain" description="B30.2/SPRY" evidence="4">
    <location>
        <begin position="69"/>
        <end position="246"/>
    </location>
</feature>
<feature type="domain" description="Helicase C-terminal" evidence="3">
    <location>
        <begin position="483"/>
        <end position="676"/>
    </location>
</feature>
<feature type="short sequence motif" description="DEAD box">
    <location>
        <begin position="370"/>
        <end position="373"/>
    </location>
</feature>
<feature type="binding site" evidence="2">
    <location>
        <begin position="46"/>
        <end position="53"/>
    </location>
    <ligand>
        <name>ATP</name>
        <dbReference type="ChEBI" id="CHEBI:30616"/>
    </ligand>
</feature>
<feature type="sequence conflict" description="In Ref. 1; AAC47309." evidence="6" ref="1">
    <original>KGGAIGGAVTPW</original>
    <variation>QGRCNWRSCDSV</variation>
    <location>
        <begin position="78"/>
        <end position="89"/>
    </location>
</feature>
<feature type="sequence conflict" description="In Ref. 1; AAC47309." evidence="6" ref="1">
    <original>L</original>
    <variation>S</variation>
    <location>
        <position position="217"/>
    </location>
</feature>
<feature type="sequence conflict" description="In Ref. 1; AAC47309." evidence="6" ref="1">
    <original>AAGAPS</original>
    <variation>DSWST</variation>
    <location>
        <begin position="274"/>
        <end position="279"/>
    </location>
</feature>
<feature type="sequence conflict" description="In Ref. 1; AAC47309." evidence="6" ref="1">
    <original>R</original>
    <variation>G</variation>
    <location>
        <position position="365"/>
    </location>
</feature>
<feature type="sequence conflict" description="In Ref. 1; AAC47309." evidence="6" ref="1">
    <original>V</original>
    <variation>G</variation>
    <location>
        <position position="429"/>
    </location>
</feature>
<feature type="sequence conflict" description="In Ref. 4; AAD09429." evidence="6" ref="4">
    <original>S</original>
    <variation>C</variation>
    <location>
        <position position="458"/>
    </location>
</feature>
<feature type="sequence conflict" description="In Ref. 1; AAC47309." evidence="6" ref="1">
    <original>GG</original>
    <variation>D</variation>
    <location>
        <begin position="529"/>
        <end position="530"/>
    </location>
</feature>
<feature type="sequence conflict" description="In Ref. 4; AAD09429." evidence="6" ref="4">
    <original>MINVTLPDDK</original>
    <variation>SKFSNFETIT</variation>
    <location>
        <begin position="580"/>
        <end position="589"/>
    </location>
</feature>
<feature type="sequence conflict" description="In Ref. 1; AAC47309." evidence="6" ref="1">
    <original>K</original>
    <variation>P</variation>
    <location>
        <position position="682"/>
    </location>
</feature>
<feature type="sequence conflict" description="In Ref. 1; AAC47309." evidence="6" ref="1">
    <original>V</original>
    <variation>E</variation>
    <location>
        <position position="704"/>
    </location>
</feature>
<comment type="function">
    <text evidence="1">Acts as an ATP-dependent RNA helicase, able to unwind both RNA-RNA and RNA-DNA duplexes. Possesses 5' single-stranded RNA overhang nuclease activity (By similarity).</text>
</comment>
<comment type="catalytic activity">
    <reaction>
        <text>ATP + H2O = ADP + phosphate + H(+)</text>
        <dbReference type="Rhea" id="RHEA:13065"/>
        <dbReference type="ChEBI" id="CHEBI:15377"/>
        <dbReference type="ChEBI" id="CHEBI:15378"/>
        <dbReference type="ChEBI" id="CHEBI:30616"/>
        <dbReference type="ChEBI" id="CHEBI:43474"/>
        <dbReference type="ChEBI" id="CHEBI:456216"/>
        <dbReference type="EC" id="3.6.4.13"/>
    </reaction>
</comment>
<comment type="developmental stage">
    <text evidence="5">Expressed both maternally and zygotically throughout development. Expression is highest in early embryos.</text>
</comment>
<comment type="similarity">
    <text evidence="6">Belongs to the DEAD box helicase family. DDX1 subfamily.</text>
</comment>
<protein>
    <recommendedName>
        <fullName>ATP-dependent RNA helicase Ddx1</fullName>
        <shortName>DEAD box protein 1</shortName>
        <ecNumber>3.6.4.13</ecNumber>
    </recommendedName>
</protein>